<feature type="chain" id="PRO_0000430886" description="NAC domain-containing protein 86">
    <location>
        <begin position="1"/>
        <end position="476"/>
    </location>
</feature>
<feature type="domain" description="NAC" evidence="1">
    <location>
        <begin position="6"/>
        <end position="157"/>
    </location>
</feature>
<feature type="DNA-binding region" evidence="1">
    <location>
        <begin position="105"/>
        <end position="163"/>
    </location>
</feature>
<protein>
    <recommendedName>
        <fullName evidence="4">NAC domain-containing protein 86</fullName>
    </recommendedName>
    <alternativeName>
        <fullName evidence="5">NAM-like protein</fullName>
    </alternativeName>
    <alternativeName>
        <fullName evidence="5">No apical meristem-like protein</fullName>
    </alternativeName>
</protein>
<sequence length="476" mass="54829">MAPVSLPPGFRFHPTDEELITYYLKRKINGQEIELEIIPEVDLYKCEPWDLPGKSLIPSKDQEWFFFSPRDRKYPNGSRTNRATKGGYWKATGKDRRVSWRDRAIGTKKTLVYYRGRAPHGIRTGWVMHEYRLDESECEPSAFGMQDAYALCRVFKKIVIEAKPRDQHQQQHQPYVHTSSNISGSSSFDVCSDLEISSNTPYNTAAHIQPRFGNANAISDHDDWSQYLSQNMPTSFSDYGSPYGPYLTQSKVNTEVQCEMFQHQMSLPPLRVENSQAQTSDFSKRLHQNSGQSGFDDFTFAASNSNQFYNSNVDDHLIHIGNLDEQSYIEEQELILPSFQSNDQDLELYGGSRTNTIDNIEIDDFFSFENQAQDNDNSNVTPNSAGFEMIGEEIIVNHKMLISTRQTTEILYYQVVPSQILKIHINPVHGNEERTMLMEEDSDDSWFQKAENVAKMKLKQISLVAKRYYKCLTIIF</sequence>
<reference key="1">
    <citation type="journal article" date="1997" name="DNA Res.">
        <title>Structural analysis of Arabidopsis thaliana chromosome 5. I. Sequence features of the 1.6 Mb regions covered by twenty physically assigned P1 clones.</title>
        <authorList>
            <person name="Sato S."/>
            <person name="Kotani H."/>
            <person name="Nakamura Y."/>
            <person name="Kaneko T."/>
            <person name="Asamizu E."/>
            <person name="Fukami M."/>
            <person name="Miyajima N."/>
            <person name="Tabata S."/>
        </authorList>
    </citation>
    <scope>NUCLEOTIDE SEQUENCE [LARGE SCALE GENOMIC DNA]</scope>
    <source>
        <strain>cv. Columbia</strain>
    </source>
</reference>
<reference key="2">
    <citation type="journal article" date="2017" name="Plant J.">
        <title>Araport11: a complete reannotation of the Arabidopsis thaliana reference genome.</title>
        <authorList>
            <person name="Cheng C.Y."/>
            <person name="Krishnakumar V."/>
            <person name="Chan A.P."/>
            <person name="Thibaud-Nissen F."/>
            <person name="Schobel S."/>
            <person name="Town C.D."/>
        </authorList>
    </citation>
    <scope>GENOME REANNOTATION</scope>
    <source>
        <strain>cv. Columbia</strain>
    </source>
</reference>
<reference key="3">
    <citation type="journal article" date="2014" name="Science">
        <title>Plant development. Arabidopsis NAC45/86 direct sieve element morphogenesis culminating in enucleation.</title>
        <authorList>
            <person name="Furuta K.M."/>
            <person name="Yadav S.R."/>
            <person name="Lehesranta S."/>
            <person name="Belevich I."/>
            <person name="Miyashima S."/>
            <person name="Heo J.O."/>
            <person name="Vaten A."/>
            <person name="Lindgren O."/>
            <person name="De Rybel B."/>
            <person name="Van Isterdael G."/>
            <person name="Somervuo P."/>
            <person name="Lichtenberger R."/>
            <person name="Rocha R."/>
            <person name="Thitamadee S."/>
            <person name="Taehtiharju S."/>
            <person name="Auvinen P."/>
            <person name="Beeckman T."/>
            <person name="Jokitalo E."/>
            <person name="Helariutta Y."/>
        </authorList>
    </citation>
    <scope>FUNCTION</scope>
    <scope>TISSUE SPECIFICITY</scope>
    <scope>DISRUPTION PHENOTYPE</scope>
</reference>
<evidence type="ECO:0000255" key="1">
    <source>
        <dbReference type="PROSITE-ProRule" id="PRU00353"/>
    </source>
</evidence>
<evidence type="ECO:0000269" key="2">
    <source>
    </source>
</evidence>
<evidence type="ECO:0000312" key="3">
    <source>
        <dbReference type="Araport" id="AT5G17260"/>
    </source>
</evidence>
<evidence type="ECO:0000312" key="4">
    <source>
        <dbReference type="EMBL" id="AED92405.1"/>
    </source>
</evidence>
<evidence type="ECO:0000312" key="5">
    <source>
        <dbReference type="EMBL" id="BAB10513.1"/>
    </source>
</evidence>
<evidence type="ECO:0000312" key="6">
    <source>
        <dbReference type="Proteomes" id="UP000006548"/>
    </source>
</evidence>
<proteinExistence type="evidence at transcript level"/>
<name>NAC86_ARATH</name>
<organism evidence="6">
    <name type="scientific">Arabidopsis thaliana</name>
    <name type="common">Mouse-ear cress</name>
    <dbReference type="NCBI Taxonomy" id="3702"/>
    <lineage>
        <taxon>Eukaryota</taxon>
        <taxon>Viridiplantae</taxon>
        <taxon>Streptophyta</taxon>
        <taxon>Embryophyta</taxon>
        <taxon>Tracheophyta</taxon>
        <taxon>Spermatophyta</taxon>
        <taxon>Magnoliopsida</taxon>
        <taxon>eudicotyledons</taxon>
        <taxon>Gunneridae</taxon>
        <taxon>Pentapetalae</taxon>
        <taxon>rosids</taxon>
        <taxon>malvids</taxon>
        <taxon>Brassicales</taxon>
        <taxon>Brassicaceae</taxon>
        <taxon>Camelineae</taxon>
        <taxon>Arabidopsis</taxon>
    </lineage>
</organism>
<comment type="function">
    <text evidence="2">Transcription factor directing sieve element enucleation and cytosol degradation. Not required for formation of lytic vacuoles. Regulates, with NAC045, the transcription of NEN1, NEN2, NEN3, NEN4, RTM1, RTM2, UBP16, PLDZETA, ABCB10 and At1g26450.</text>
</comment>
<comment type="subcellular location">
    <subcellularLocation>
        <location evidence="1">Nucleus</location>
    </subcellularLocation>
</comment>
<comment type="tissue specificity">
    <text evidence="2">Expressed in a few sieve element cells before enucleation and in phloem-pole pericycle cells.</text>
</comment>
<comment type="domain">
    <text evidence="1">The NAC domain includes a DNA binding domain and a dimerization domain.</text>
</comment>
<comment type="disruption phenotype">
    <text evidence="2">No visible phenotype, due to the redundancy with NAC045 (AC A4VCM0). Nac045 and nac086 double mutants exhibit seedling lethality with defective development of the protophloem sieve element.</text>
</comment>
<gene>
    <name evidence="4" type="primary">NAC086</name>
    <name evidence="3" type="ordered locus">At5g17260</name>
    <name evidence="5" type="ORF">MKP11.11</name>
</gene>
<accession>Q9FFI5</accession>
<dbReference type="EMBL" id="AB005238">
    <property type="protein sequence ID" value="BAB10513.1"/>
    <property type="molecule type" value="Genomic_DNA"/>
</dbReference>
<dbReference type="EMBL" id="CP002688">
    <property type="protein sequence ID" value="AED92405.1"/>
    <property type="molecule type" value="Genomic_DNA"/>
</dbReference>
<dbReference type="RefSeq" id="NP_197228.1">
    <property type="nucleotide sequence ID" value="NM_121732.2"/>
</dbReference>
<dbReference type="SMR" id="Q9FFI5"/>
<dbReference type="FunCoup" id="Q9FFI5">
    <property type="interactions" value="16"/>
</dbReference>
<dbReference type="STRING" id="3702.Q9FFI5"/>
<dbReference type="PaxDb" id="3702-AT5G17260.1"/>
<dbReference type="EnsemblPlants" id="AT5G17260.1">
    <property type="protein sequence ID" value="AT5G17260.1"/>
    <property type="gene ID" value="AT5G17260"/>
</dbReference>
<dbReference type="GeneID" id="831591"/>
<dbReference type="Gramene" id="AT5G17260.1">
    <property type="protein sequence ID" value="AT5G17260.1"/>
    <property type="gene ID" value="AT5G17260"/>
</dbReference>
<dbReference type="KEGG" id="ath:AT5G17260"/>
<dbReference type="Araport" id="AT5G17260"/>
<dbReference type="TAIR" id="AT5G17260">
    <property type="gene designation" value="NAC086"/>
</dbReference>
<dbReference type="eggNOG" id="ENOG502QV39">
    <property type="taxonomic scope" value="Eukaryota"/>
</dbReference>
<dbReference type="HOGENOM" id="CLU_024022_1_1_1"/>
<dbReference type="InParanoid" id="Q9FFI5"/>
<dbReference type="OMA" id="HDDWSQY"/>
<dbReference type="PhylomeDB" id="Q9FFI5"/>
<dbReference type="PRO" id="PR:Q9FFI5"/>
<dbReference type="Proteomes" id="UP000006548">
    <property type="component" value="Chromosome 5"/>
</dbReference>
<dbReference type="ExpressionAtlas" id="Q9FFI5">
    <property type="expression patterns" value="baseline and differential"/>
</dbReference>
<dbReference type="GO" id="GO:0005634">
    <property type="term" value="C:nucleus"/>
    <property type="evidence" value="ECO:0007669"/>
    <property type="project" value="UniProtKB-SubCell"/>
</dbReference>
<dbReference type="GO" id="GO:0003677">
    <property type="term" value="F:DNA binding"/>
    <property type="evidence" value="ECO:0007669"/>
    <property type="project" value="UniProtKB-KW"/>
</dbReference>
<dbReference type="GO" id="GO:0003700">
    <property type="term" value="F:DNA-binding transcription factor activity"/>
    <property type="evidence" value="ECO:0000250"/>
    <property type="project" value="TAIR"/>
</dbReference>
<dbReference type="GO" id="GO:0090603">
    <property type="term" value="P:sieve element differentiation"/>
    <property type="evidence" value="ECO:0000316"/>
    <property type="project" value="TAIR"/>
</dbReference>
<dbReference type="GO" id="GO:0090602">
    <property type="term" value="P:sieve element enucleation"/>
    <property type="evidence" value="ECO:0000316"/>
    <property type="project" value="TAIR"/>
</dbReference>
<dbReference type="FunFam" id="2.170.150.80:FF:000002">
    <property type="entry name" value="Nac domain-containing protein 86"/>
    <property type="match status" value="1"/>
</dbReference>
<dbReference type="Gene3D" id="2.170.150.80">
    <property type="entry name" value="NAC domain"/>
    <property type="match status" value="1"/>
</dbReference>
<dbReference type="InterPro" id="IPR003441">
    <property type="entry name" value="NAC-dom"/>
</dbReference>
<dbReference type="InterPro" id="IPR036093">
    <property type="entry name" value="NAC_dom_sf"/>
</dbReference>
<dbReference type="PANTHER" id="PTHR31744:SF210">
    <property type="entry name" value="NAC DOMAIN-CONTAINING PROTEIN 86-LIKE"/>
    <property type="match status" value="1"/>
</dbReference>
<dbReference type="PANTHER" id="PTHR31744">
    <property type="entry name" value="PROTEIN CUP-SHAPED COTYLEDON 2-RELATED"/>
    <property type="match status" value="1"/>
</dbReference>
<dbReference type="Pfam" id="PF02365">
    <property type="entry name" value="NAM"/>
    <property type="match status" value="1"/>
</dbReference>
<dbReference type="SUPFAM" id="SSF101941">
    <property type="entry name" value="NAC domain"/>
    <property type="match status" value="1"/>
</dbReference>
<dbReference type="PROSITE" id="PS51005">
    <property type="entry name" value="NAC"/>
    <property type="match status" value="1"/>
</dbReference>
<keyword id="KW-0238">DNA-binding</keyword>
<keyword id="KW-0539">Nucleus</keyword>
<keyword id="KW-1185">Reference proteome</keyword>
<keyword id="KW-0804">Transcription</keyword>
<keyword id="KW-0805">Transcription regulation</keyword>